<feature type="signal peptide" evidence="2">
    <location>
        <begin position="1"/>
        <end position="19"/>
    </location>
</feature>
<feature type="chain" id="PRO_0000015000" description="Immunoglobulin iota chain">
    <location>
        <begin position="20"/>
        <end position="145"/>
    </location>
</feature>
<feature type="domain" description="Ig-like V-type">
    <location>
        <begin position="20"/>
        <end position="132"/>
    </location>
</feature>
<feature type="region of interest" description="Framework-1">
    <location>
        <begin position="20"/>
        <end position="41"/>
    </location>
</feature>
<feature type="region of interest" description="Complementarity-determining-1">
    <location>
        <begin position="42"/>
        <end position="56"/>
    </location>
</feature>
<feature type="region of interest" description="Framework-2">
    <location>
        <begin position="57"/>
        <end position="70"/>
    </location>
</feature>
<feature type="region of interest" description="Complementarity-determining-2">
    <location>
        <begin position="71"/>
        <end position="81"/>
    </location>
</feature>
<feature type="region of interest" description="Framework-3">
    <location>
        <begin position="82"/>
        <end position="115"/>
    </location>
</feature>
<feature type="region of interest" description="Disordered" evidence="4">
    <location>
        <begin position="121"/>
        <end position="145"/>
    </location>
</feature>
<feature type="compositionally biased region" description="Basic and acidic residues" evidence="4">
    <location>
        <begin position="121"/>
        <end position="130"/>
    </location>
</feature>
<feature type="disulfide bond" evidence="3 5 6">
    <location>
        <begin position="41"/>
        <end position="115"/>
    </location>
</feature>
<feature type="sequence variant" id="VAR_024503" description="In dbSNP:rs1320.">
    <original>D</original>
    <variation>N</variation>
    <location>
        <position position="76"/>
    </location>
</feature>
<feature type="sequence variant" id="VAR_029133" description="In dbSNP:rs11089979.">
    <original>S</original>
    <variation>L</variation>
    <location>
        <position position="122"/>
    </location>
</feature>
<feature type="sequence variant" id="VAR_029134" description="In dbSNP:rs5995720.">
    <original>E</original>
    <variation>K</variation>
    <location>
        <position position="132"/>
    </location>
</feature>
<feature type="sequence conflict" description="In Ref. 6; AAA61292." evidence="7" ref="6">
    <original>L</original>
    <variation>H</variation>
    <location>
        <position position="10"/>
    </location>
</feature>
<feature type="strand" evidence="8">
    <location>
        <begin position="22"/>
        <end position="24"/>
    </location>
</feature>
<feature type="strand" evidence="9">
    <location>
        <begin position="27"/>
        <end position="32"/>
    </location>
</feature>
<feature type="strand" evidence="9">
    <location>
        <begin position="37"/>
        <end position="43"/>
    </location>
</feature>
<feature type="strand" evidence="9">
    <location>
        <begin position="45"/>
        <end position="47"/>
    </location>
</feature>
<feature type="helix" evidence="9">
    <location>
        <begin position="49"/>
        <end position="51"/>
    </location>
</feature>
<feature type="strand" evidence="9">
    <location>
        <begin position="54"/>
        <end position="59"/>
    </location>
</feature>
<feature type="strand" evidence="9">
    <location>
        <begin position="66"/>
        <end position="73"/>
    </location>
</feature>
<feature type="strand" evidence="9">
    <location>
        <begin position="76"/>
        <end position="79"/>
    </location>
</feature>
<feature type="strand" evidence="9">
    <location>
        <begin position="87"/>
        <end position="92"/>
    </location>
</feature>
<feature type="helix" evidence="9">
    <location>
        <begin position="93"/>
        <end position="95"/>
    </location>
</feature>
<feature type="strand" evidence="9">
    <location>
        <begin position="97"/>
        <end position="102"/>
    </location>
</feature>
<feature type="helix" evidence="9">
    <location>
        <begin position="107"/>
        <end position="109"/>
    </location>
</feature>
<feature type="strand" evidence="9">
    <location>
        <begin position="111"/>
        <end position="117"/>
    </location>
</feature>
<comment type="function">
    <text>Associates with the Ig-mu chain to form a molecular complex that is expressed on the surface of pre-B-cells. This complex presumably regulates Ig gene rearrangements in the early steps of B-cell differentiation.</text>
</comment>
<comment type="subunit">
    <text evidence="1 5">Interacts with IGLL1 (PubMed:17431183). Interacts with SYNV1/HRD1 (via N-terminus); this interaction leads to increased VPREB1 ubiquitination and degradation in pre-B cells, possibly through a lysosomal, not proteasomal, pathway (By similarity).</text>
</comment>
<comment type="subcellular location">
    <subcellularLocation>
        <location evidence="1">Endoplasmic reticulum</location>
    </subcellularLocation>
</comment>
<comment type="tissue specificity">
    <text>Only expressed by pre-B-cells.</text>
</comment>
<comment type="similarity">
    <text evidence="7">Belongs to the immunoglobulin superfamily.</text>
</comment>
<comment type="online information" name="Wikipedia">
    <link uri="https://en.wikipedia.org/wiki/VPREB1"/>
    <text>VPREB1</text>
</comment>
<sequence>MSWAPVLLMLFVYCTGCGPQPVLHQPPAMSSALGTTIRLTCTLRNDHDIGVYSVYWYQQRPGHPPRFLLRYFSQSDKSQGPQVPPRFSGSKDVARNRGYLSISELQPEDEAMYYCAMGARSSEKEEREREWEEEMEPTAARTRVP</sequence>
<reference key="1">
    <citation type="journal article" date="1994" name="Mol. Immunol.">
        <title>The human pre-B cell receptor: structural constraints for a tentative model of the pseudo-light (psi L) chain.</title>
        <authorList>
            <person name="Guelpa-Fonlupt V."/>
            <person name="Bossy D."/>
            <person name="Alzari P."/>
            <person name="Fumoux F."/>
            <person name="Fougereau M."/>
            <person name="Schiff C."/>
        </authorList>
    </citation>
    <scope>NUCLEOTIDE SEQUENCE [GENOMIC DNA]</scope>
</reference>
<reference key="2">
    <citation type="journal article" date="1997" name="Genome Res.">
        <title>One-megabase sequence analysis of the human immunoglobulin lambda gene locus.</title>
        <authorList>
            <person name="Kawasaki K."/>
            <person name="Minoshima S."/>
            <person name="Nakato E."/>
            <person name="Shibuya K."/>
            <person name="Shintani A."/>
            <person name="Schmeits J.L."/>
            <person name="Wang J."/>
            <person name="Shimizu N."/>
        </authorList>
    </citation>
    <scope>NUCLEOTIDE SEQUENCE [GENOMIC DNA]</scope>
</reference>
<reference key="3">
    <citation type="journal article" date="2004" name="Genome Biol.">
        <title>A genome annotation-driven approach to cloning the human ORFeome.</title>
        <authorList>
            <person name="Collins J.E."/>
            <person name="Wright C.L."/>
            <person name="Edwards C.A."/>
            <person name="Davis M.P."/>
            <person name="Grinham J.A."/>
            <person name="Cole C.G."/>
            <person name="Goward M.E."/>
            <person name="Aguado B."/>
            <person name="Mallya M."/>
            <person name="Mokrab Y."/>
            <person name="Huckle E.J."/>
            <person name="Beare D.M."/>
            <person name="Dunham I."/>
        </authorList>
    </citation>
    <scope>NUCLEOTIDE SEQUENCE [LARGE SCALE MRNA]</scope>
</reference>
<reference key="4">
    <citation type="journal article" date="1999" name="Nature">
        <title>The DNA sequence of human chromosome 22.</title>
        <authorList>
            <person name="Dunham I."/>
            <person name="Hunt A.R."/>
            <person name="Collins J.E."/>
            <person name="Bruskiewich R."/>
            <person name="Beare D.M."/>
            <person name="Clamp M."/>
            <person name="Smink L.J."/>
            <person name="Ainscough R."/>
            <person name="Almeida J.P."/>
            <person name="Babbage A.K."/>
            <person name="Bagguley C."/>
            <person name="Bailey J."/>
            <person name="Barlow K.F."/>
            <person name="Bates K.N."/>
            <person name="Beasley O.P."/>
            <person name="Bird C.P."/>
            <person name="Blakey S.E."/>
            <person name="Bridgeman A.M."/>
            <person name="Buck D."/>
            <person name="Burgess J."/>
            <person name="Burrill W.D."/>
            <person name="Burton J."/>
            <person name="Carder C."/>
            <person name="Carter N.P."/>
            <person name="Chen Y."/>
            <person name="Clark G."/>
            <person name="Clegg S.M."/>
            <person name="Cobley V.E."/>
            <person name="Cole C.G."/>
            <person name="Collier R.E."/>
            <person name="Connor R."/>
            <person name="Conroy D."/>
            <person name="Corby N.R."/>
            <person name="Coville G.J."/>
            <person name="Cox A.V."/>
            <person name="Davis J."/>
            <person name="Dawson E."/>
            <person name="Dhami P.D."/>
            <person name="Dockree C."/>
            <person name="Dodsworth S.J."/>
            <person name="Durbin R.M."/>
            <person name="Ellington A.G."/>
            <person name="Evans K.L."/>
            <person name="Fey J.M."/>
            <person name="Fleming K."/>
            <person name="French L."/>
            <person name="Garner A.A."/>
            <person name="Gilbert J.G.R."/>
            <person name="Goward M.E."/>
            <person name="Grafham D.V."/>
            <person name="Griffiths M.N.D."/>
            <person name="Hall C."/>
            <person name="Hall R.E."/>
            <person name="Hall-Tamlyn G."/>
            <person name="Heathcott R.W."/>
            <person name="Ho S."/>
            <person name="Holmes S."/>
            <person name="Hunt S.E."/>
            <person name="Jones M.C."/>
            <person name="Kershaw J."/>
            <person name="Kimberley A.M."/>
            <person name="King A."/>
            <person name="Laird G.K."/>
            <person name="Langford C.F."/>
            <person name="Leversha M.A."/>
            <person name="Lloyd C."/>
            <person name="Lloyd D.M."/>
            <person name="Martyn I.D."/>
            <person name="Mashreghi-Mohammadi M."/>
            <person name="Matthews L.H."/>
            <person name="Mccann O.T."/>
            <person name="Mcclay J."/>
            <person name="Mclaren S."/>
            <person name="McMurray A.A."/>
            <person name="Milne S.A."/>
            <person name="Mortimore B.J."/>
            <person name="Odell C.N."/>
            <person name="Pavitt R."/>
            <person name="Pearce A.V."/>
            <person name="Pearson D."/>
            <person name="Phillimore B.J.C.T."/>
            <person name="Phillips S.H."/>
            <person name="Plumb R.W."/>
            <person name="Ramsay H."/>
            <person name="Ramsey Y."/>
            <person name="Rogers L."/>
            <person name="Ross M.T."/>
            <person name="Scott C.E."/>
            <person name="Sehra H.K."/>
            <person name="Skuce C.D."/>
            <person name="Smalley S."/>
            <person name="Smith M.L."/>
            <person name="Soderlund C."/>
            <person name="Spragon L."/>
            <person name="Steward C.A."/>
            <person name="Sulston J.E."/>
            <person name="Swann R.M."/>
            <person name="Vaudin M."/>
            <person name="Wall M."/>
            <person name="Wallis J.M."/>
            <person name="Whiteley M.N."/>
            <person name="Willey D.L."/>
            <person name="Williams L."/>
            <person name="Williams S.A."/>
            <person name="Williamson H."/>
            <person name="Wilmer T.E."/>
            <person name="Wilming L."/>
            <person name="Wright C.L."/>
            <person name="Hubbard T."/>
            <person name="Bentley D.R."/>
            <person name="Beck S."/>
            <person name="Rogers J."/>
            <person name="Shimizu N."/>
            <person name="Minoshima S."/>
            <person name="Kawasaki K."/>
            <person name="Sasaki T."/>
            <person name="Asakawa S."/>
            <person name="Kudoh J."/>
            <person name="Shintani A."/>
            <person name="Shibuya K."/>
            <person name="Yoshizaki Y."/>
            <person name="Aoki N."/>
            <person name="Mitsuyama S."/>
            <person name="Roe B.A."/>
            <person name="Chen F."/>
            <person name="Chu L."/>
            <person name="Crabtree J."/>
            <person name="Deschamps S."/>
            <person name="Do A."/>
            <person name="Do T."/>
            <person name="Dorman A."/>
            <person name="Fang F."/>
            <person name="Fu Y."/>
            <person name="Hu P."/>
            <person name="Hua A."/>
            <person name="Kenton S."/>
            <person name="Lai H."/>
            <person name="Lao H.I."/>
            <person name="Lewis J."/>
            <person name="Lewis S."/>
            <person name="Lin S.-P."/>
            <person name="Loh P."/>
            <person name="Malaj E."/>
            <person name="Nguyen T."/>
            <person name="Pan H."/>
            <person name="Phan S."/>
            <person name="Qi S."/>
            <person name="Qian Y."/>
            <person name="Ray L."/>
            <person name="Ren Q."/>
            <person name="Shaull S."/>
            <person name="Sloan D."/>
            <person name="Song L."/>
            <person name="Wang Q."/>
            <person name="Wang Y."/>
            <person name="Wang Z."/>
            <person name="White J."/>
            <person name="Willingham D."/>
            <person name="Wu H."/>
            <person name="Yao Z."/>
            <person name="Zhan M."/>
            <person name="Zhang G."/>
            <person name="Chissoe S."/>
            <person name="Murray J."/>
            <person name="Miller N."/>
            <person name="Minx P."/>
            <person name="Fulton R."/>
            <person name="Johnson D."/>
            <person name="Bemis G."/>
            <person name="Bentley D."/>
            <person name="Bradshaw H."/>
            <person name="Bourne S."/>
            <person name="Cordes M."/>
            <person name="Du Z."/>
            <person name="Fulton L."/>
            <person name="Goela D."/>
            <person name="Graves T."/>
            <person name="Hawkins J."/>
            <person name="Hinds K."/>
            <person name="Kemp K."/>
            <person name="Latreille P."/>
            <person name="Layman D."/>
            <person name="Ozersky P."/>
            <person name="Rohlfing T."/>
            <person name="Scheet P."/>
            <person name="Walker C."/>
            <person name="Wamsley A."/>
            <person name="Wohldmann P."/>
            <person name="Pepin K."/>
            <person name="Nelson J."/>
            <person name="Korf I."/>
            <person name="Bedell J.A."/>
            <person name="Hillier L.W."/>
            <person name="Mardis E."/>
            <person name="Waterston R."/>
            <person name="Wilson R."/>
            <person name="Emanuel B.S."/>
            <person name="Shaikh T."/>
            <person name="Kurahashi H."/>
            <person name="Saitta S."/>
            <person name="Budarf M.L."/>
            <person name="McDermid H.E."/>
            <person name="Johnson A."/>
            <person name="Wong A.C.C."/>
            <person name="Morrow B.E."/>
            <person name="Edelmann L."/>
            <person name="Kim U.J."/>
            <person name="Shizuya H."/>
            <person name="Simon M.I."/>
            <person name="Dumanski J.P."/>
            <person name="Peyrard M."/>
            <person name="Kedra D."/>
            <person name="Seroussi E."/>
            <person name="Fransson I."/>
            <person name="Tapia I."/>
            <person name="Bruder C.E."/>
            <person name="O'Brien K.P."/>
            <person name="Wilkinson P."/>
            <person name="Bodenteich A."/>
            <person name="Hartman K."/>
            <person name="Hu X."/>
            <person name="Khan A.S."/>
            <person name="Lane L."/>
            <person name="Tilahun Y."/>
            <person name="Wright H."/>
        </authorList>
    </citation>
    <scope>NUCLEOTIDE SEQUENCE [LARGE SCALE GENOMIC DNA]</scope>
</reference>
<reference key="5">
    <citation type="submission" date="2005-07" db="EMBL/GenBank/DDBJ databases">
        <authorList>
            <person name="Mural R.J."/>
            <person name="Istrail S."/>
            <person name="Sutton G.G."/>
            <person name="Florea L."/>
            <person name="Halpern A.L."/>
            <person name="Mobarry C.M."/>
            <person name="Lippert R."/>
            <person name="Walenz B."/>
            <person name="Shatkay H."/>
            <person name="Dew I."/>
            <person name="Miller J.R."/>
            <person name="Flanigan M.J."/>
            <person name="Edwards N.J."/>
            <person name="Bolanos R."/>
            <person name="Fasulo D."/>
            <person name="Halldorsson B.V."/>
            <person name="Hannenhalli S."/>
            <person name="Turner R."/>
            <person name="Yooseph S."/>
            <person name="Lu F."/>
            <person name="Nusskern D.R."/>
            <person name="Shue B.C."/>
            <person name="Zheng X.H."/>
            <person name="Zhong F."/>
            <person name="Delcher A.L."/>
            <person name="Huson D.H."/>
            <person name="Kravitz S.A."/>
            <person name="Mouchard L."/>
            <person name="Reinert K."/>
            <person name="Remington K.A."/>
            <person name="Clark A.G."/>
            <person name="Waterman M.S."/>
            <person name="Eichler E.E."/>
            <person name="Adams M.D."/>
            <person name="Hunkapiller M.W."/>
            <person name="Myers E.W."/>
            <person name="Venter J.C."/>
        </authorList>
    </citation>
    <scope>NUCLEOTIDE SEQUENCE [LARGE SCALE GENOMIC DNA]</scope>
</reference>
<reference key="6">
    <citation type="journal article" date="1988" name="EMBO J.">
        <title>Structure and pre-B lymphocyte restricted expression of the VpreB in humans and conservation of its structure in other mammalian species.</title>
        <authorList>
            <person name="Bauer S.R."/>
            <person name="Kudo A."/>
            <person name="Melchers F."/>
        </authorList>
    </citation>
    <scope>NUCLEOTIDE SEQUENCE [GENOMIC DNA] OF 1-139</scope>
</reference>
<reference key="7">
    <citation type="journal article" date="2011" name="BMC Syst. Biol.">
        <title>Initial characterization of the human central proteome.</title>
        <authorList>
            <person name="Burkard T.R."/>
            <person name="Planyavsky M."/>
            <person name="Kaupe I."/>
            <person name="Breitwieser F.P."/>
            <person name="Buerckstuemmer T."/>
            <person name="Bennett K.L."/>
            <person name="Superti-Furga G."/>
            <person name="Colinge J."/>
        </authorList>
    </citation>
    <scope>IDENTIFICATION BY MASS SPECTROMETRY [LARGE SCALE ANALYSIS]</scope>
</reference>
<reference key="8">
    <citation type="journal article" date="2007" name="Science">
        <title>Structural insight into pre-B cell receptor function.</title>
        <authorList>
            <person name="Bankovich A.J."/>
            <person name="Raunser S."/>
            <person name="Juo Z.S."/>
            <person name="Walz T."/>
            <person name="Davis M.M."/>
            <person name="Garcia K.C."/>
        </authorList>
    </citation>
    <scope>X-RAY CRYSTALLOGRAPHY (2.3 ANGSTROMS) OF 21-119 IN COMPLEX WITH IGLL1</scope>
    <scope>SUBUNIT</scope>
    <scope>DISULFIDE BOND</scope>
</reference>
<reference key="9">
    <citation type="journal article" date="2008" name="Protein Sci.">
        <title>Engineering and characterization of a single chain surrogate light chain variable domain.</title>
        <authorList>
            <person name="Morstadt L."/>
            <person name="Bohm A."/>
            <person name="Yuksel D."/>
            <person name="Kumar K."/>
            <person name="Stollar B.D."/>
            <person name="Baleja J.D."/>
        </authorList>
    </citation>
    <scope>X-RAY CRYSTALLOGRAPHY (2.0 ANGSTROMS) OF 95-108</scope>
    <scope>DISULFIDE BOND</scope>
</reference>
<gene>
    <name type="primary">VPREB1</name>
    <name type="synonym">VPREB</name>
</gene>
<keyword id="KW-0002">3D-structure</keyword>
<keyword id="KW-1015">Disulfide bond</keyword>
<keyword id="KW-0256">Endoplasmic reticulum</keyword>
<keyword id="KW-0393">Immunoglobulin domain</keyword>
<keyword id="KW-1267">Proteomics identification</keyword>
<keyword id="KW-1185">Reference proteome</keyword>
<keyword id="KW-0732">Signal</keyword>
<name>VPREB_HUMAN</name>
<evidence type="ECO:0000250" key="1">
    <source>
        <dbReference type="UniProtKB" id="P13372"/>
    </source>
</evidence>
<evidence type="ECO:0000255" key="2"/>
<evidence type="ECO:0000255" key="3">
    <source>
        <dbReference type="PROSITE-ProRule" id="PRU00114"/>
    </source>
</evidence>
<evidence type="ECO:0000256" key="4">
    <source>
        <dbReference type="SAM" id="MobiDB-lite"/>
    </source>
</evidence>
<evidence type="ECO:0000269" key="5">
    <source>
    </source>
</evidence>
<evidence type="ECO:0000269" key="6">
    <source>
    </source>
</evidence>
<evidence type="ECO:0000305" key="7"/>
<evidence type="ECO:0007829" key="8">
    <source>
        <dbReference type="PDB" id="2H32"/>
    </source>
</evidence>
<evidence type="ECO:0007829" key="9">
    <source>
        <dbReference type="PDB" id="3BJ9"/>
    </source>
</evidence>
<protein>
    <recommendedName>
        <fullName>Immunoglobulin iota chain</fullName>
    </recommendedName>
    <alternativeName>
        <fullName>CD179 antigen-like family member A</fullName>
    </alternativeName>
    <alternativeName>
        <fullName>Protein VPreB1</fullName>
    </alternativeName>
    <alternativeName>
        <fullName>V(pre)B protein</fullName>
        <shortName>VpreB protein</shortName>
    </alternativeName>
    <cdAntigenName>CD179a</cdAntigenName>
</protein>
<accession>P12018</accession>
<accession>B5MCG2</accession>
<organism>
    <name type="scientific">Homo sapiens</name>
    <name type="common">Human</name>
    <dbReference type="NCBI Taxonomy" id="9606"/>
    <lineage>
        <taxon>Eukaryota</taxon>
        <taxon>Metazoa</taxon>
        <taxon>Chordata</taxon>
        <taxon>Craniata</taxon>
        <taxon>Vertebrata</taxon>
        <taxon>Euteleostomi</taxon>
        <taxon>Mammalia</taxon>
        <taxon>Eutheria</taxon>
        <taxon>Euarchontoglires</taxon>
        <taxon>Primates</taxon>
        <taxon>Haplorrhini</taxon>
        <taxon>Catarrhini</taxon>
        <taxon>Hominidae</taxon>
        <taxon>Homo</taxon>
    </lineage>
</organism>
<dbReference type="EMBL" id="S74019">
    <property type="protein sequence ID" value="AAB32118.1"/>
    <property type="molecule type" value="Genomic_DNA"/>
</dbReference>
<dbReference type="EMBL" id="D86992">
    <property type="protein sequence ID" value="BAA19987.1"/>
    <property type="molecule type" value="Genomic_DNA"/>
</dbReference>
<dbReference type="EMBL" id="D88270">
    <property type="protein sequence ID" value="BAA20030.1"/>
    <property type="molecule type" value="Genomic_DNA"/>
</dbReference>
<dbReference type="EMBL" id="CR456609">
    <property type="protein sequence ID" value="CAG30495.1"/>
    <property type="molecule type" value="mRNA"/>
</dbReference>
<dbReference type="EMBL" id="CH471095">
    <property type="protein sequence ID" value="EAW59498.1"/>
    <property type="molecule type" value="Genomic_DNA"/>
</dbReference>
<dbReference type="EMBL" id="M34927">
    <property type="protein sequence ID" value="AAA61292.1"/>
    <property type="molecule type" value="Genomic_DNA"/>
</dbReference>
<dbReference type="CCDS" id="CCDS13798.1"/>
<dbReference type="PIR" id="I57832">
    <property type="entry name" value="I57832"/>
</dbReference>
<dbReference type="PIR" id="S00258">
    <property type="entry name" value="S00258"/>
</dbReference>
<dbReference type="RefSeq" id="NP_009059.1">
    <property type="nucleotide sequence ID" value="NM_007128.4"/>
</dbReference>
<dbReference type="PDB" id="2H32">
    <property type="method" value="X-ray"/>
    <property type="resolution" value="2.70 A"/>
    <property type="chains" value="A=20-145"/>
</dbReference>
<dbReference type="PDB" id="2H3N">
    <property type="method" value="X-ray"/>
    <property type="resolution" value="2.30 A"/>
    <property type="chains" value="A/C=21-119"/>
</dbReference>
<dbReference type="PDB" id="3BJ9">
    <property type="method" value="X-ray"/>
    <property type="resolution" value="2.00 A"/>
    <property type="chains" value="1=22-121"/>
</dbReference>
<dbReference type="PDBsum" id="2H32"/>
<dbReference type="PDBsum" id="2H3N"/>
<dbReference type="PDBsum" id="3BJ9"/>
<dbReference type="SMR" id="P12018"/>
<dbReference type="BioGRID" id="113280">
    <property type="interactions" value="1"/>
</dbReference>
<dbReference type="CORUM" id="P12018"/>
<dbReference type="FunCoup" id="P12018">
    <property type="interactions" value="375"/>
</dbReference>
<dbReference type="IntAct" id="P12018">
    <property type="interactions" value="1"/>
</dbReference>
<dbReference type="STRING" id="9606.ENSP00000385361"/>
<dbReference type="iPTMnet" id="P12018"/>
<dbReference type="PhosphoSitePlus" id="P12018"/>
<dbReference type="BioMuta" id="VPREB1"/>
<dbReference type="DMDM" id="9911096"/>
<dbReference type="PaxDb" id="9606-ENSP00000385361"/>
<dbReference type="PeptideAtlas" id="P12018"/>
<dbReference type="ProteomicsDB" id="52817"/>
<dbReference type="TopDownProteomics" id="P12018"/>
<dbReference type="Antibodypedia" id="23612">
    <property type="antibodies" value="171 antibodies from 26 providers"/>
</dbReference>
<dbReference type="DNASU" id="7441"/>
<dbReference type="Ensembl" id="ENST00000403807.4">
    <property type="protein sequence ID" value="ENSP00000385361.3"/>
    <property type="gene ID" value="ENSG00000169575.5"/>
</dbReference>
<dbReference type="GeneID" id="7441"/>
<dbReference type="KEGG" id="hsa:7441"/>
<dbReference type="MANE-Select" id="ENST00000403807.4">
    <property type="protein sequence ID" value="ENSP00000385361.3"/>
    <property type="RefSeq nucleotide sequence ID" value="NM_007128.4"/>
    <property type="RefSeq protein sequence ID" value="NP_009059.1"/>
</dbReference>
<dbReference type="UCSC" id="uc002zvx.2">
    <property type="organism name" value="human"/>
</dbReference>
<dbReference type="AGR" id="HGNC:12709"/>
<dbReference type="CTD" id="7441"/>
<dbReference type="DisGeNET" id="7441"/>
<dbReference type="GeneCards" id="VPREB1"/>
<dbReference type="HGNC" id="HGNC:12709">
    <property type="gene designation" value="VPREB1"/>
</dbReference>
<dbReference type="HPA" id="ENSG00000169575">
    <property type="expression patterns" value="Tissue enriched (bone)"/>
</dbReference>
<dbReference type="MIM" id="605141">
    <property type="type" value="gene"/>
</dbReference>
<dbReference type="neXtProt" id="NX_P12018"/>
<dbReference type="OpenTargets" id="ENSG00000169575"/>
<dbReference type="PharmGKB" id="PA37324"/>
<dbReference type="VEuPathDB" id="HostDB:ENSG00000169575"/>
<dbReference type="eggNOG" id="ENOG502RTXJ">
    <property type="taxonomic scope" value="Eukaryota"/>
</dbReference>
<dbReference type="GeneTree" id="ENSGT00940000161017"/>
<dbReference type="HOGENOM" id="CLU_077975_4_0_1"/>
<dbReference type="InParanoid" id="P12018"/>
<dbReference type="OMA" id="FYSIFWY"/>
<dbReference type="OrthoDB" id="8908372at2759"/>
<dbReference type="PAN-GO" id="P12018">
    <property type="GO annotations" value="3 GO annotations based on evolutionary models"/>
</dbReference>
<dbReference type="PhylomeDB" id="P12018"/>
<dbReference type="TreeFam" id="TF352061"/>
<dbReference type="PathwayCommons" id="P12018"/>
<dbReference type="Reactome" id="R-HSA-202733">
    <property type="pathway name" value="Cell surface interactions at the vascular wall"/>
</dbReference>
<dbReference type="SignaLink" id="P12018"/>
<dbReference type="BioGRID-ORCS" id="7441">
    <property type="hits" value="16 hits in 1138 CRISPR screens"/>
</dbReference>
<dbReference type="EvolutionaryTrace" id="P12018"/>
<dbReference type="GeneWiki" id="VPREB1"/>
<dbReference type="GenomeRNAi" id="7441"/>
<dbReference type="Pharos" id="P12018">
    <property type="development level" value="Tbio"/>
</dbReference>
<dbReference type="PRO" id="PR:P12018"/>
<dbReference type="Proteomes" id="UP000005640">
    <property type="component" value="Chromosome 22"/>
</dbReference>
<dbReference type="RNAct" id="P12018">
    <property type="molecule type" value="protein"/>
</dbReference>
<dbReference type="Bgee" id="ENSG00000169575">
    <property type="expression patterns" value="Expressed in male germ line stem cell (sensu Vertebrata) in testis and 22 other cell types or tissues"/>
</dbReference>
<dbReference type="ExpressionAtlas" id="P12018">
    <property type="expression patterns" value="baseline and differential"/>
</dbReference>
<dbReference type="GO" id="GO:0005783">
    <property type="term" value="C:endoplasmic reticulum"/>
    <property type="evidence" value="ECO:0007669"/>
    <property type="project" value="UniProtKB-SubCell"/>
</dbReference>
<dbReference type="GO" id="GO:0005576">
    <property type="term" value="C:extracellular region"/>
    <property type="evidence" value="ECO:0000304"/>
    <property type="project" value="Reactome"/>
</dbReference>
<dbReference type="GO" id="GO:0019814">
    <property type="term" value="C:immunoglobulin complex"/>
    <property type="evidence" value="ECO:0000318"/>
    <property type="project" value="GO_Central"/>
</dbReference>
<dbReference type="GO" id="GO:0006955">
    <property type="term" value="P:immune response"/>
    <property type="evidence" value="ECO:0000318"/>
    <property type="project" value="GO_Central"/>
</dbReference>
<dbReference type="FunFam" id="2.60.40.10:FF:000721">
    <property type="entry name" value="Immunoglobulin lambda variable 5-45"/>
    <property type="match status" value="1"/>
</dbReference>
<dbReference type="Gene3D" id="2.60.40.10">
    <property type="entry name" value="Immunoglobulins"/>
    <property type="match status" value="1"/>
</dbReference>
<dbReference type="InterPro" id="IPR007110">
    <property type="entry name" value="Ig-like_dom"/>
</dbReference>
<dbReference type="InterPro" id="IPR036179">
    <property type="entry name" value="Ig-like_dom_sf"/>
</dbReference>
<dbReference type="InterPro" id="IPR013783">
    <property type="entry name" value="Ig-like_fold"/>
</dbReference>
<dbReference type="InterPro" id="IPR003599">
    <property type="entry name" value="Ig_sub"/>
</dbReference>
<dbReference type="InterPro" id="IPR013106">
    <property type="entry name" value="Ig_V-set"/>
</dbReference>
<dbReference type="InterPro" id="IPR050150">
    <property type="entry name" value="IgV_Light_Chain"/>
</dbReference>
<dbReference type="PANTHER" id="PTHR23267">
    <property type="entry name" value="IMMUNOGLOBULIN LIGHT CHAIN"/>
    <property type="match status" value="1"/>
</dbReference>
<dbReference type="Pfam" id="PF07686">
    <property type="entry name" value="V-set"/>
    <property type="match status" value="1"/>
</dbReference>
<dbReference type="SMART" id="SM00409">
    <property type="entry name" value="IG"/>
    <property type="match status" value="1"/>
</dbReference>
<dbReference type="SMART" id="SM00406">
    <property type="entry name" value="IGv"/>
    <property type="match status" value="1"/>
</dbReference>
<dbReference type="SUPFAM" id="SSF48726">
    <property type="entry name" value="Immunoglobulin"/>
    <property type="match status" value="1"/>
</dbReference>
<dbReference type="PROSITE" id="PS50835">
    <property type="entry name" value="IG_LIKE"/>
    <property type="match status" value="1"/>
</dbReference>
<proteinExistence type="evidence at protein level"/>